<name>RISB_DESHY</name>
<sequence length="154" mass="16432">MMTYEGKLIAEGLKFGIVAARFNEFITNKLVGGALDALLRHGVAESDIEIAWVPGAFEIPLVAQKMAETKKYDAIICLGAVIRGATPHFDFVSAEVSKGVAHVGLETKLPVVFGVLTTDTIEQAIERAGTKAGNKGFDSAITAIETVNLLKMIQ</sequence>
<dbReference type="EC" id="2.5.1.78" evidence="1"/>
<dbReference type="EMBL" id="AP008230">
    <property type="protein sequence ID" value="BAE83454.1"/>
    <property type="molecule type" value="Genomic_DNA"/>
</dbReference>
<dbReference type="SMR" id="Q24WY8"/>
<dbReference type="STRING" id="138119.DSY1665"/>
<dbReference type="KEGG" id="dsy:DSY1665"/>
<dbReference type="eggNOG" id="COG0054">
    <property type="taxonomic scope" value="Bacteria"/>
</dbReference>
<dbReference type="HOGENOM" id="CLU_089358_1_1_9"/>
<dbReference type="UniPathway" id="UPA00275">
    <property type="reaction ID" value="UER00404"/>
</dbReference>
<dbReference type="Proteomes" id="UP000001946">
    <property type="component" value="Chromosome"/>
</dbReference>
<dbReference type="GO" id="GO:0005829">
    <property type="term" value="C:cytosol"/>
    <property type="evidence" value="ECO:0007669"/>
    <property type="project" value="TreeGrafter"/>
</dbReference>
<dbReference type="GO" id="GO:0009349">
    <property type="term" value="C:riboflavin synthase complex"/>
    <property type="evidence" value="ECO:0007669"/>
    <property type="project" value="InterPro"/>
</dbReference>
<dbReference type="GO" id="GO:0000906">
    <property type="term" value="F:6,7-dimethyl-8-ribityllumazine synthase activity"/>
    <property type="evidence" value="ECO:0007669"/>
    <property type="project" value="UniProtKB-UniRule"/>
</dbReference>
<dbReference type="GO" id="GO:0009231">
    <property type="term" value="P:riboflavin biosynthetic process"/>
    <property type="evidence" value="ECO:0007669"/>
    <property type="project" value="UniProtKB-UniRule"/>
</dbReference>
<dbReference type="CDD" id="cd09209">
    <property type="entry name" value="Lumazine_synthase-I"/>
    <property type="match status" value="1"/>
</dbReference>
<dbReference type="FunFam" id="3.40.50.960:FF:000001">
    <property type="entry name" value="6,7-dimethyl-8-ribityllumazine synthase"/>
    <property type="match status" value="1"/>
</dbReference>
<dbReference type="Gene3D" id="3.40.50.960">
    <property type="entry name" value="Lumazine/riboflavin synthase"/>
    <property type="match status" value="1"/>
</dbReference>
<dbReference type="HAMAP" id="MF_00178">
    <property type="entry name" value="Lumazine_synth"/>
    <property type="match status" value="1"/>
</dbReference>
<dbReference type="InterPro" id="IPR034964">
    <property type="entry name" value="LS"/>
</dbReference>
<dbReference type="InterPro" id="IPR002180">
    <property type="entry name" value="LS/RS"/>
</dbReference>
<dbReference type="InterPro" id="IPR036467">
    <property type="entry name" value="LS/RS_sf"/>
</dbReference>
<dbReference type="NCBIfam" id="TIGR00114">
    <property type="entry name" value="lumazine-synth"/>
    <property type="match status" value="1"/>
</dbReference>
<dbReference type="NCBIfam" id="NF000812">
    <property type="entry name" value="PRK00061.1-4"/>
    <property type="match status" value="1"/>
</dbReference>
<dbReference type="PANTHER" id="PTHR21058:SF0">
    <property type="entry name" value="6,7-DIMETHYL-8-RIBITYLLUMAZINE SYNTHASE"/>
    <property type="match status" value="1"/>
</dbReference>
<dbReference type="PANTHER" id="PTHR21058">
    <property type="entry name" value="6,7-DIMETHYL-8-RIBITYLLUMAZINE SYNTHASE DMRL SYNTHASE LUMAZINE SYNTHASE"/>
    <property type="match status" value="1"/>
</dbReference>
<dbReference type="Pfam" id="PF00885">
    <property type="entry name" value="DMRL_synthase"/>
    <property type="match status" value="1"/>
</dbReference>
<dbReference type="SUPFAM" id="SSF52121">
    <property type="entry name" value="Lumazine synthase"/>
    <property type="match status" value="1"/>
</dbReference>
<reference key="1">
    <citation type="journal article" date="2006" name="J. Bacteriol.">
        <title>Complete genome sequence of the dehalorespiring bacterium Desulfitobacterium hafniense Y51 and comparison with Dehalococcoides ethenogenes 195.</title>
        <authorList>
            <person name="Nonaka H."/>
            <person name="Keresztes G."/>
            <person name="Shinoda Y."/>
            <person name="Ikenaga Y."/>
            <person name="Abe M."/>
            <person name="Naito K."/>
            <person name="Inatomi K."/>
            <person name="Furukawa K."/>
            <person name="Inui M."/>
            <person name="Yukawa H."/>
        </authorList>
    </citation>
    <scope>NUCLEOTIDE SEQUENCE [LARGE SCALE GENOMIC DNA]</scope>
    <source>
        <strain>Y51</strain>
    </source>
</reference>
<protein>
    <recommendedName>
        <fullName evidence="1">6,7-dimethyl-8-ribityllumazine synthase</fullName>
        <shortName evidence="1">DMRL synthase</shortName>
        <shortName evidence="1">LS</shortName>
        <shortName evidence="1">Lumazine synthase</shortName>
        <ecNumber evidence="1">2.5.1.78</ecNumber>
    </recommendedName>
</protein>
<gene>
    <name evidence="1" type="primary">ribH</name>
    <name type="ordered locus">DSY1665</name>
</gene>
<keyword id="KW-1185">Reference proteome</keyword>
<keyword id="KW-0686">Riboflavin biosynthesis</keyword>
<keyword id="KW-0808">Transferase</keyword>
<organism>
    <name type="scientific">Desulfitobacterium hafniense (strain Y51)</name>
    <dbReference type="NCBI Taxonomy" id="138119"/>
    <lineage>
        <taxon>Bacteria</taxon>
        <taxon>Bacillati</taxon>
        <taxon>Bacillota</taxon>
        <taxon>Clostridia</taxon>
        <taxon>Eubacteriales</taxon>
        <taxon>Desulfitobacteriaceae</taxon>
        <taxon>Desulfitobacterium</taxon>
    </lineage>
</organism>
<feature type="chain" id="PRO_1000040415" description="6,7-dimethyl-8-ribityllumazine synthase">
    <location>
        <begin position="1"/>
        <end position="154"/>
    </location>
</feature>
<feature type="active site" description="Proton donor" evidence="1">
    <location>
        <position position="88"/>
    </location>
</feature>
<feature type="binding site" evidence="1">
    <location>
        <position position="22"/>
    </location>
    <ligand>
        <name>5-amino-6-(D-ribitylamino)uracil</name>
        <dbReference type="ChEBI" id="CHEBI:15934"/>
    </ligand>
</feature>
<feature type="binding site" evidence="1">
    <location>
        <begin position="56"/>
        <end position="58"/>
    </location>
    <ligand>
        <name>5-amino-6-(D-ribitylamino)uracil</name>
        <dbReference type="ChEBI" id="CHEBI:15934"/>
    </ligand>
</feature>
<feature type="binding site" evidence="1">
    <location>
        <begin position="80"/>
        <end position="82"/>
    </location>
    <ligand>
        <name>5-amino-6-(D-ribitylamino)uracil</name>
        <dbReference type="ChEBI" id="CHEBI:15934"/>
    </ligand>
</feature>
<feature type="binding site" evidence="1">
    <location>
        <begin position="85"/>
        <end position="86"/>
    </location>
    <ligand>
        <name>(2S)-2-hydroxy-3-oxobutyl phosphate</name>
        <dbReference type="ChEBI" id="CHEBI:58830"/>
    </ligand>
</feature>
<feature type="binding site" evidence="1">
    <location>
        <position position="113"/>
    </location>
    <ligand>
        <name>5-amino-6-(D-ribitylamino)uracil</name>
        <dbReference type="ChEBI" id="CHEBI:15934"/>
    </ligand>
</feature>
<feature type="binding site" evidence="1">
    <location>
        <position position="127"/>
    </location>
    <ligand>
        <name>(2S)-2-hydroxy-3-oxobutyl phosphate</name>
        <dbReference type="ChEBI" id="CHEBI:58830"/>
    </ligand>
</feature>
<comment type="function">
    <text evidence="1">Catalyzes the formation of 6,7-dimethyl-8-ribityllumazine by condensation of 5-amino-6-(D-ribitylamino)uracil with 3,4-dihydroxy-2-butanone 4-phosphate. This is the penultimate step in the biosynthesis of riboflavin.</text>
</comment>
<comment type="catalytic activity">
    <reaction evidence="1">
        <text>(2S)-2-hydroxy-3-oxobutyl phosphate + 5-amino-6-(D-ribitylamino)uracil = 6,7-dimethyl-8-(1-D-ribityl)lumazine + phosphate + 2 H2O + H(+)</text>
        <dbReference type="Rhea" id="RHEA:26152"/>
        <dbReference type="ChEBI" id="CHEBI:15377"/>
        <dbReference type="ChEBI" id="CHEBI:15378"/>
        <dbReference type="ChEBI" id="CHEBI:15934"/>
        <dbReference type="ChEBI" id="CHEBI:43474"/>
        <dbReference type="ChEBI" id="CHEBI:58201"/>
        <dbReference type="ChEBI" id="CHEBI:58830"/>
        <dbReference type="EC" id="2.5.1.78"/>
    </reaction>
</comment>
<comment type="pathway">
    <text evidence="1">Cofactor biosynthesis; riboflavin biosynthesis; riboflavin from 2-hydroxy-3-oxobutyl phosphate and 5-amino-6-(D-ribitylamino)uracil: step 1/2.</text>
</comment>
<comment type="similarity">
    <text evidence="1">Belongs to the DMRL synthase family.</text>
</comment>
<accession>Q24WY8</accession>
<evidence type="ECO:0000255" key="1">
    <source>
        <dbReference type="HAMAP-Rule" id="MF_00178"/>
    </source>
</evidence>
<proteinExistence type="inferred from homology"/>